<name>DIAP2_DROME</name>
<reference key="1">
    <citation type="journal article" date="1995" name="Cell">
        <title>Drosophila homologs of baculovirus inhibitor of apoptosis proteins function to block cell death.</title>
        <authorList>
            <person name="Hay B.A."/>
            <person name="Wassarman D.A."/>
            <person name="Rubin G.M."/>
        </authorList>
    </citation>
    <scope>NUCLEOTIDE SEQUENCE [MRNA]</scope>
    <scope>FUNCTION</scope>
    <source>
        <tissue>Eye imaginal disk</tissue>
    </source>
</reference>
<reference key="2">
    <citation type="journal article" date="1996" name="Nature">
        <title>Suppression of apoptosis in mammalian cells by NAIP and a related family of IAP genes.</title>
        <authorList>
            <person name="Liston P."/>
            <person name="Roy N."/>
            <person name="Tamai K."/>
            <person name="Lefebvre C."/>
            <person name="Baird S."/>
            <person name="Cherton-Horvat G."/>
            <person name="Farahani R."/>
            <person name="McLean M."/>
            <person name="Ikeda J."/>
            <person name="Mackenzie A."/>
            <person name="Korneluk R.G."/>
        </authorList>
    </citation>
    <scope>NUCLEOTIDE SEQUENCE [MRNA]</scope>
    <source>
        <tissue>Embryo</tissue>
    </source>
</reference>
<reference key="3">
    <citation type="journal article" date="1996" name="EMBO J.">
        <title>A conserved family of cellular genes related to the baculovirus iap gene and encoding apoptosis inhibitors.</title>
        <authorList>
            <person name="Duckett C.S."/>
            <person name="Nava V.E."/>
            <person name="Gedrich R.W."/>
            <person name="Clem R.J."/>
            <person name="van Dongen J.L."/>
            <person name="Gilfillan M.C."/>
            <person name="Shiels H."/>
            <person name="Hardwick J.M."/>
            <person name="Thompson C.B."/>
        </authorList>
    </citation>
    <scope>NUCLEOTIDE SEQUENCE [GENOMIC DNA / MRNA]</scope>
    <source>
        <strain>Canton-S</strain>
    </source>
</reference>
<reference key="4">
    <citation type="thesis" date="1991" institute="Vanderbilt University / Nashville" country="United States">
        <authorList>
            <person name="Ross J.L."/>
        </authorList>
    </citation>
    <scope>NUCLEOTIDE SEQUENCE</scope>
    <source>
        <strain>Canton-S</strain>
    </source>
</reference>
<reference key="5">
    <citation type="journal article" date="2000" name="Science">
        <title>The genome sequence of Drosophila melanogaster.</title>
        <authorList>
            <person name="Adams M.D."/>
            <person name="Celniker S.E."/>
            <person name="Holt R.A."/>
            <person name="Evans C.A."/>
            <person name="Gocayne J.D."/>
            <person name="Amanatides P.G."/>
            <person name="Scherer S.E."/>
            <person name="Li P.W."/>
            <person name="Hoskins R.A."/>
            <person name="Galle R.F."/>
            <person name="George R.A."/>
            <person name="Lewis S.E."/>
            <person name="Richards S."/>
            <person name="Ashburner M."/>
            <person name="Henderson S.N."/>
            <person name="Sutton G.G."/>
            <person name="Wortman J.R."/>
            <person name="Yandell M.D."/>
            <person name="Zhang Q."/>
            <person name="Chen L.X."/>
            <person name="Brandon R.C."/>
            <person name="Rogers Y.-H.C."/>
            <person name="Blazej R.G."/>
            <person name="Champe M."/>
            <person name="Pfeiffer B.D."/>
            <person name="Wan K.H."/>
            <person name="Doyle C."/>
            <person name="Baxter E.G."/>
            <person name="Helt G."/>
            <person name="Nelson C.R."/>
            <person name="Miklos G.L.G."/>
            <person name="Abril J.F."/>
            <person name="Agbayani A."/>
            <person name="An H.-J."/>
            <person name="Andrews-Pfannkoch C."/>
            <person name="Baldwin D."/>
            <person name="Ballew R.M."/>
            <person name="Basu A."/>
            <person name="Baxendale J."/>
            <person name="Bayraktaroglu L."/>
            <person name="Beasley E.M."/>
            <person name="Beeson K.Y."/>
            <person name="Benos P.V."/>
            <person name="Berman B.P."/>
            <person name="Bhandari D."/>
            <person name="Bolshakov S."/>
            <person name="Borkova D."/>
            <person name="Botchan M.R."/>
            <person name="Bouck J."/>
            <person name="Brokstein P."/>
            <person name="Brottier P."/>
            <person name="Burtis K.C."/>
            <person name="Busam D.A."/>
            <person name="Butler H."/>
            <person name="Cadieu E."/>
            <person name="Center A."/>
            <person name="Chandra I."/>
            <person name="Cherry J.M."/>
            <person name="Cawley S."/>
            <person name="Dahlke C."/>
            <person name="Davenport L.B."/>
            <person name="Davies P."/>
            <person name="de Pablos B."/>
            <person name="Delcher A."/>
            <person name="Deng Z."/>
            <person name="Mays A.D."/>
            <person name="Dew I."/>
            <person name="Dietz S.M."/>
            <person name="Dodson K."/>
            <person name="Doup L.E."/>
            <person name="Downes M."/>
            <person name="Dugan-Rocha S."/>
            <person name="Dunkov B.C."/>
            <person name="Dunn P."/>
            <person name="Durbin K.J."/>
            <person name="Evangelista C.C."/>
            <person name="Ferraz C."/>
            <person name="Ferriera S."/>
            <person name="Fleischmann W."/>
            <person name="Fosler C."/>
            <person name="Gabrielian A.E."/>
            <person name="Garg N.S."/>
            <person name="Gelbart W.M."/>
            <person name="Glasser K."/>
            <person name="Glodek A."/>
            <person name="Gong F."/>
            <person name="Gorrell J.H."/>
            <person name="Gu Z."/>
            <person name="Guan P."/>
            <person name="Harris M."/>
            <person name="Harris N.L."/>
            <person name="Harvey D.A."/>
            <person name="Heiman T.J."/>
            <person name="Hernandez J.R."/>
            <person name="Houck J."/>
            <person name="Hostin D."/>
            <person name="Houston K.A."/>
            <person name="Howland T.J."/>
            <person name="Wei M.-H."/>
            <person name="Ibegwam C."/>
            <person name="Jalali M."/>
            <person name="Kalush F."/>
            <person name="Karpen G.H."/>
            <person name="Ke Z."/>
            <person name="Kennison J.A."/>
            <person name="Ketchum K.A."/>
            <person name="Kimmel B.E."/>
            <person name="Kodira C.D."/>
            <person name="Kraft C.L."/>
            <person name="Kravitz S."/>
            <person name="Kulp D."/>
            <person name="Lai Z."/>
            <person name="Lasko P."/>
            <person name="Lei Y."/>
            <person name="Levitsky A.A."/>
            <person name="Li J.H."/>
            <person name="Li Z."/>
            <person name="Liang Y."/>
            <person name="Lin X."/>
            <person name="Liu X."/>
            <person name="Mattei B."/>
            <person name="McIntosh T.C."/>
            <person name="McLeod M.P."/>
            <person name="McPherson D."/>
            <person name="Merkulov G."/>
            <person name="Milshina N.V."/>
            <person name="Mobarry C."/>
            <person name="Morris J."/>
            <person name="Moshrefi A."/>
            <person name="Mount S.M."/>
            <person name="Moy M."/>
            <person name="Murphy B."/>
            <person name="Murphy L."/>
            <person name="Muzny D.M."/>
            <person name="Nelson D.L."/>
            <person name="Nelson D.R."/>
            <person name="Nelson K.A."/>
            <person name="Nixon K."/>
            <person name="Nusskern D.R."/>
            <person name="Pacleb J.M."/>
            <person name="Palazzolo M."/>
            <person name="Pittman G.S."/>
            <person name="Pan S."/>
            <person name="Pollard J."/>
            <person name="Puri V."/>
            <person name="Reese M.G."/>
            <person name="Reinert K."/>
            <person name="Remington K."/>
            <person name="Saunders R.D.C."/>
            <person name="Scheeler F."/>
            <person name="Shen H."/>
            <person name="Shue B.C."/>
            <person name="Siden-Kiamos I."/>
            <person name="Simpson M."/>
            <person name="Skupski M.P."/>
            <person name="Smith T.J."/>
            <person name="Spier E."/>
            <person name="Spradling A.C."/>
            <person name="Stapleton M."/>
            <person name="Strong R."/>
            <person name="Sun E."/>
            <person name="Svirskas R."/>
            <person name="Tector C."/>
            <person name="Turner R."/>
            <person name="Venter E."/>
            <person name="Wang A.H."/>
            <person name="Wang X."/>
            <person name="Wang Z.-Y."/>
            <person name="Wassarman D.A."/>
            <person name="Weinstock G.M."/>
            <person name="Weissenbach J."/>
            <person name="Williams S.M."/>
            <person name="Woodage T."/>
            <person name="Worley K.C."/>
            <person name="Wu D."/>
            <person name="Yang S."/>
            <person name="Yao Q.A."/>
            <person name="Ye J."/>
            <person name="Yeh R.-F."/>
            <person name="Zaveri J.S."/>
            <person name="Zhan M."/>
            <person name="Zhang G."/>
            <person name="Zhao Q."/>
            <person name="Zheng L."/>
            <person name="Zheng X.H."/>
            <person name="Zhong F.N."/>
            <person name="Zhong W."/>
            <person name="Zhou X."/>
            <person name="Zhu S.C."/>
            <person name="Zhu X."/>
            <person name="Smith H.O."/>
            <person name="Gibbs R.A."/>
            <person name="Myers E.W."/>
            <person name="Rubin G.M."/>
            <person name="Venter J.C."/>
        </authorList>
    </citation>
    <scope>NUCLEOTIDE SEQUENCE [LARGE SCALE GENOMIC DNA]</scope>
    <source>
        <strain>Berkeley</strain>
    </source>
</reference>
<reference key="6">
    <citation type="journal article" date="2002" name="Genome Biol.">
        <title>Annotation of the Drosophila melanogaster euchromatic genome: a systematic review.</title>
        <authorList>
            <person name="Misra S."/>
            <person name="Crosby M.A."/>
            <person name="Mungall C.J."/>
            <person name="Matthews B.B."/>
            <person name="Campbell K.S."/>
            <person name="Hradecky P."/>
            <person name="Huang Y."/>
            <person name="Kaminker J.S."/>
            <person name="Millburn G.H."/>
            <person name="Prochnik S.E."/>
            <person name="Smith C.D."/>
            <person name="Tupy J.L."/>
            <person name="Whitfield E.J."/>
            <person name="Bayraktaroglu L."/>
            <person name="Berman B.P."/>
            <person name="Bettencourt B.R."/>
            <person name="Celniker S.E."/>
            <person name="de Grey A.D.N.J."/>
            <person name="Drysdale R.A."/>
            <person name="Harris N.L."/>
            <person name="Richter J."/>
            <person name="Russo S."/>
            <person name="Schroeder A.J."/>
            <person name="Shu S.Q."/>
            <person name="Stapleton M."/>
            <person name="Yamada C."/>
            <person name="Ashburner M."/>
            <person name="Gelbart W.M."/>
            <person name="Rubin G.M."/>
            <person name="Lewis S.E."/>
        </authorList>
    </citation>
    <scope>GENOME REANNOTATION</scope>
    <source>
        <strain>Berkeley</strain>
    </source>
</reference>
<reference key="7">
    <citation type="journal article" date="2002" name="Genome Biol.">
        <title>A Drosophila full-length cDNA resource.</title>
        <authorList>
            <person name="Stapleton M."/>
            <person name="Carlson J.W."/>
            <person name="Brokstein P."/>
            <person name="Yu C."/>
            <person name="Champe M."/>
            <person name="George R.A."/>
            <person name="Guarin H."/>
            <person name="Kronmiller B."/>
            <person name="Pacleb J.M."/>
            <person name="Park S."/>
            <person name="Wan K.H."/>
            <person name="Rubin G.M."/>
            <person name="Celniker S.E."/>
        </authorList>
    </citation>
    <scope>NUCLEOTIDE SEQUENCE [LARGE SCALE MRNA]</scope>
    <source>
        <strain>Berkeley</strain>
        <tissue>Embryo</tissue>
    </source>
</reference>
<reference key="8">
    <citation type="journal article" date="1996" name="Proc. Natl. Acad. Sci. U.S.A.">
        <title>Cloning and expression of apoptosis inhibitory protein homologs that function to inhibit apoptosis and/or bind tumor necrosis factor receptor-associated factors.</title>
        <authorList>
            <person name="Uren A.G."/>
            <person name="Pakusch M."/>
            <person name="Hawkins C.J."/>
            <person name="Puls K.L."/>
            <person name="Vaux D.L."/>
        </authorList>
    </citation>
    <scope>NUCLEOTIDE SEQUENCE [MRNA] OF 17-498</scope>
    <source>
        <tissue>Larva</tissue>
    </source>
</reference>
<reference key="9">
    <citation type="journal article" date="2001" name="Cell Death Differ.">
        <title>STRICA, a novel Drosophila melanogaster caspase with an unusual serine/threonine-rich prodomain, interacts with DIAP1 and DIAP2.</title>
        <authorList>
            <person name="Doumanis J."/>
            <person name="Quinn L."/>
            <person name="Richardson H."/>
            <person name="Kumar S."/>
        </authorList>
    </citation>
    <scope>INTERACTION WITH STRICA</scope>
</reference>
<reference key="10">
    <citation type="journal article" date="2006" name="Mol. Cell. Biol.">
        <title>The Drosophila inhibitor of apoptosis protein DIAP2 functions in innate immunity and is essential to resist gram-negative bacterial infection.</title>
        <authorList>
            <person name="Leulier F."/>
            <person name="Lhocine N."/>
            <person name="Lemaitre B."/>
            <person name="Meier P."/>
        </authorList>
    </citation>
    <scope>FUNCTION</scope>
    <scope>DISRUPTION PHENOTYPE</scope>
</reference>
<reference key="11">
    <citation type="journal article" date="2007" name="J. Cell Biol.">
        <title>DIAP2 functions as a mechanism-based regulator of drICE that contributes to the caspase activity threshold in living cells.</title>
        <authorList>
            <person name="Ribeiro P.S."/>
            <person name="Kuranaga E."/>
            <person name="Tenev T."/>
            <person name="Leulier F."/>
            <person name="Miura M."/>
            <person name="Meier P."/>
        </authorList>
    </citation>
    <scope>FUNCTION</scope>
    <scope>DOMAIN</scope>
    <scope>INTERACTION WITH DRICE; GRIM; HID AND RPR</scope>
    <scope>DISRUPTION PHENOTYPE</scope>
    <scope>CLEAVAGE</scope>
    <scope>MUTAGENESIS OF ASP-92; ASP-100; CYS-149; ASP-163; CYS-249 AND ASP-263</scope>
</reference>
<reference key="12">
    <citation type="journal article" date="2007" name="J. Biol. Chem.">
        <title>The Drosophila inhibitor of apoptosis (IAP) DIAP2 is dispensable for cell survival, required for the innate immune response to gram-negative bacterial infection, and can be negatively regulated by the reaper/hid/grim family of IAP-binding apoptosis inducers.</title>
        <authorList>
            <person name="Huh J.R."/>
            <person name="Foe I."/>
            <person name="Muro I."/>
            <person name="Chen C.H."/>
            <person name="Seol J.H."/>
            <person name="Yoo S.J."/>
            <person name="Guo M."/>
            <person name="Park J.M."/>
            <person name="Hay B.A."/>
        </authorList>
    </citation>
    <scope>FUNCTION</scope>
    <scope>DISRUPTION PHENOTYPE</scope>
    <scope>INDUCTION BY GRAM-NEGATIVE BACTERIA</scope>
</reference>
<reference key="13">
    <citation type="journal article" date="2009" name="Trends Cell Biol.">
        <title>Ubiquitin-mediated regulation of apoptosis.</title>
        <authorList>
            <person name="Broemer M."/>
            <person name="Meier P."/>
        </authorList>
    </citation>
    <scope>REVIEW ON FUNCTION</scope>
</reference>
<reference key="14">
    <citation type="journal article" date="2010" name="Curr. Opin. Cell Biol.">
        <title>To fight or die - inhibitor of apoptosis proteins at the crossroad of innate immunity and death.</title>
        <authorList>
            <person name="Lopez J."/>
            <person name="Meier P."/>
        </authorList>
    </citation>
    <scope>REVIEW ON FUNCTION</scope>
</reference>
<reference key="15">
    <citation type="journal article" date="2012" name="EMBO J.">
        <title>Ubiquitylation of the initiator caspase DREDD is required for innate immune signalling.</title>
        <authorList>
            <person name="Meinander A."/>
            <person name="Runchel C."/>
            <person name="Tenev T."/>
            <person name="Chen L."/>
            <person name="Kim C.H."/>
            <person name="Ribeiro P.S."/>
            <person name="Broemer M."/>
            <person name="Leulier F."/>
            <person name="Zvelebil M."/>
            <person name="Silverman N."/>
            <person name="Meier P."/>
        </authorList>
    </citation>
    <scope>FUNCTION</scope>
    <scope>INTERACTION WITH DREDD</scope>
    <scope>DOMAIN</scope>
    <scope>MUTAGENESIS OF CYS-149; ASP-163; CYS-249; ASP-263 AND CYS-466</scope>
</reference>
<reference key="16">
    <citation type="journal article" date="2014" name="J. Cell. Physiol.">
        <title>Epithelial immune response in Drosophila malpighian tubules: interplay between Diap2 and ion channels.</title>
        <authorList>
            <person name="Verma P."/>
            <person name="Tapadia M.G."/>
        </authorList>
    </citation>
    <scope>FUNCTION</scope>
    <scope>SUBCELLULAR LOCATION</scope>
    <scope>TISSUE SPECIFICITY</scope>
    <scope>DEVELOPMENTAL STAGE</scope>
    <scope>INDUCTION</scope>
    <scope>DISRUPTION PHENOTYPE</scope>
</reference>
<evidence type="ECO:0000255" key="1">
    <source>
        <dbReference type="PROSITE-ProRule" id="PRU00029"/>
    </source>
</evidence>
<evidence type="ECO:0000255" key="2">
    <source>
        <dbReference type="PROSITE-ProRule" id="PRU00175"/>
    </source>
</evidence>
<evidence type="ECO:0000269" key="3">
    <source>
    </source>
</evidence>
<evidence type="ECO:0000269" key="4">
    <source>
    </source>
</evidence>
<evidence type="ECO:0000269" key="5">
    <source>
    </source>
</evidence>
<evidence type="ECO:0000269" key="6">
    <source>
    </source>
</evidence>
<evidence type="ECO:0000269" key="7">
    <source>
    </source>
</evidence>
<evidence type="ECO:0000269" key="8">
    <source>
    </source>
</evidence>
<evidence type="ECO:0000269" key="9">
    <source>
    </source>
</evidence>
<evidence type="ECO:0000305" key="10"/>
<protein>
    <recommendedName>
        <fullName>Death-associated inhibitor of apoptosis 2</fullName>
    </recommendedName>
    <alternativeName>
        <fullName>Apoptosis 2 inhibitor</fullName>
    </alternativeName>
    <alternativeName>
        <fullName>IAP homolog A</fullName>
    </alternativeName>
    <alternativeName>
        <fullName>IAP-like protein</fullName>
        <shortName>ILP</shortName>
        <shortName>dILP</shortName>
    </alternativeName>
    <alternativeName>
        <fullName>Inhibitor of apoptosis 2</fullName>
    </alternativeName>
</protein>
<sequence length="498" mass="54538">MTELGMELESVRLATFGEWPLNAPVSAEDLVANGFFATGNWLEAECHFCHVRIDRWEYGDQVAERHRRSSPICSMVLAPNHCGNVPRSQESDNEGNSVVDSPESCSCPDLLLEANRLVTFKDWPNPNITPQALAKAGFYYLNRLDHVKCVWCNGVIAKWEKNDNAFEEHKRFFPQCPRVQMGPLIEFATGKNLDELGIQPTTLPLRPKYACVDARLRTFTDWPISNIQPASALAQAGLYYQKIGDQVRCFHCNIGLRSWQKEDEPWFEHAKWSPKCQFVLLAKGPAYVSEVLATTAANASSQPATAPAPTLQADVLMDEAPAKEALALGIDGGVVRNAIQRKLLSSGCAFSTLDELLHDIFDDAGAGAALEVREPPEPSAPFIEPCQATTSKAASVPIPVADSIPAKPQAAEAVANISKITDEIQKMSVATPNGNLSLEEENRQLKDARLCKVCLDEEVGVVFLPCGHLATCNQCAPSVANCPMCRADIKGFVRTFLS</sequence>
<comment type="function">
    <text evidence="4 5 6 7 8 9">Required for activation of NF-kappaB transcription factors in the immune deficiency (Imd) signaling cascade which is essential for innate immune responses upon infection by Gram-negative bacteria (PubMed:16894030, PubMed:17068333). Promotes cytoplasmic cleavage of Rel and its translocation to the nucleus where it drives expression of antimicrobial peptides (PubMed:17068333, PubMed:24374974). Binds, polyubiquitinates and activates Dredd which is required for Rel-mediated induction of antimicrobial peptides (PubMed:22549468). Anti-apoptotic protein which binds, ubiquitinates and inactivates the effector caspase Drice (PubMed:18166655). Suppresses rpr and hid-dependent cell death in the eye (PubMed:8548811). However, has also been shown to have little, if any, role in the regulation of the canonical caspase-dependent apoptosis pathway (PubMed:17068333). Plays a role in regulating the expression of ion channels (PubMed:24374974).</text>
</comment>
<comment type="subunit">
    <text evidence="3 6 7">Interacts with the caspase Strica (PubMed:11550090). Interacts (via BIR2 domain) with rpr and grim (PubMed:18166655). Interacts (via the BIR2 and BIR3 domains) with hid (PubMed:18166655). Interacts (via BIR3 domain) with Drice (PubMed:18166655). Interacts with Dredd; likely to bind Dredd simultaneously with Fadd to form a trimeric complex (PubMed:22549468).</text>
</comment>
<comment type="interaction">
    <interactant intactId="EBI-112046">
        <id>Q24307</id>
    </interactant>
    <interactant intactId="EBI-91422">
        <id>O01382</id>
        <label>Drice</label>
    </interactant>
    <organismsDiffer>false</organismsDiffer>
    <experiments>4</experiments>
</comment>
<comment type="interaction">
    <interactant intactId="EBI-112046">
        <id>Q24307</id>
    </interactant>
    <interactant intactId="EBI-167445">
        <id>Q24570</id>
        <label>grim</label>
    </interactant>
    <organismsDiffer>false</organismsDiffer>
    <experiments>2</experiments>
</comment>
<comment type="interaction">
    <interactant intactId="EBI-112046">
        <id>Q24307</id>
    </interactant>
    <interactant intactId="EBI-135509">
        <id>Q24106</id>
        <label>hid</label>
    </interactant>
    <organismsDiffer>false</organismsDiffer>
    <experiments>3</experiments>
</comment>
<comment type="interaction">
    <interactant intactId="EBI-112046">
        <id>Q24307</id>
    </interactant>
    <interactant intactId="EBI-106786">
        <id>Q24475</id>
        <label>rpr</label>
    </interactant>
    <organismsDiffer>false</organismsDiffer>
    <experiments>3</experiments>
</comment>
<comment type="subcellular location">
    <subcellularLocation>
        <location evidence="8">Nucleus</location>
    </subcellularLocation>
    <subcellularLocation>
        <location evidence="8">Cytoplasm</location>
    </subcellularLocation>
</comment>
<comment type="tissue specificity">
    <text evidence="8">Expressed in both principal and stellar cells of the Malphigian tubules.</text>
</comment>
<comment type="developmental stage">
    <text evidence="8">Expressed in Malpighian tubules from the 3rd instar larval stage and expression continues in pupae and adults with highest levels in adults (at protein level).</text>
</comment>
<comment type="induction">
    <text evidence="5 8">Constitutively expressed (PubMed:17068333). Up-regulated by bacterial lipopolysaccharides (LPS) in Malpighian tubules but not in salivary glands (PubMed:24374974).</text>
</comment>
<comment type="PTM">
    <text evidence="6">Caspase-dependent cleavage is required for suppression of Drice-mediated cell death.</text>
</comment>
<comment type="disruption phenotype">
    <text evidence="4 5 6 8">Normal development and viability (PubMed:16894030, PubMed:17068333). Acute sensitivity to infection by Gram-negative bacteria with failure to induce expression of antibacterial peptide genes and inability to mount a proper innate immune response (PubMed:16894030, PubMed:17068333, PubMed:24374974). Loss of cleavage and nuclear translocation of Rel (PubMed:17068333, PubMed:24374974). Increased activity of the effector caspase Drice and increased apoptosis following x-ray irradiation (PubMed:18166655). Reduced ion channel expression in Malpighian tubules (PubMed:24374974).</text>
</comment>
<comment type="similarity">
    <text evidence="10">Belongs to the IAP family.</text>
</comment>
<accession>Q24307</accession>
<accession>A4UZI4</accession>
<accession>Q24115</accession>
<accession>Q24149</accession>
<accession>Q24177</accession>
<accession>Q960U3</accession>
<accession>Q9V7G1</accession>
<organism>
    <name type="scientific">Drosophila melanogaster</name>
    <name type="common">Fruit fly</name>
    <dbReference type="NCBI Taxonomy" id="7227"/>
    <lineage>
        <taxon>Eukaryota</taxon>
        <taxon>Metazoa</taxon>
        <taxon>Ecdysozoa</taxon>
        <taxon>Arthropoda</taxon>
        <taxon>Hexapoda</taxon>
        <taxon>Insecta</taxon>
        <taxon>Pterygota</taxon>
        <taxon>Neoptera</taxon>
        <taxon>Endopterygota</taxon>
        <taxon>Diptera</taxon>
        <taxon>Brachycera</taxon>
        <taxon>Muscomorpha</taxon>
        <taxon>Ephydroidea</taxon>
        <taxon>Drosophilidae</taxon>
        <taxon>Drosophila</taxon>
        <taxon>Sophophora</taxon>
    </lineage>
</organism>
<proteinExistence type="evidence at protein level"/>
<gene>
    <name type="primary">Diap2</name>
    <name type="synonym">DIHA</name>
    <name type="synonym">Iap2</name>
    <name type="synonym">Ilp</name>
    <name type="ORF">CG8293</name>
</gene>
<dbReference type="EMBL" id="L49441">
    <property type="protein sequence ID" value="AAC41610.1"/>
    <property type="molecule type" value="mRNA"/>
</dbReference>
<dbReference type="EMBL" id="U45881">
    <property type="protein sequence ID" value="AAC46988.1"/>
    <property type="molecule type" value="mRNA"/>
</dbReference>
<dbReference type="EMBL" id="U32373">
    <property type="protein sequence ID" value="AAC47155.1"/>
    <property type="molecule type" value="mRNA"/>
</dbReference>
<dbReference type="EMBL" id="M96581">
    <property type="status" value="NOT_ANNOTATED_CDS"/>
    <property type="molecule type" value="Genomic_DNA"/>
</dbReference>
<dbReference type="EMBL" id="AE013599">
    <property type="protein sequence ID" value="AAF58095.1"/>
    <property type="molecule type" value="Genomic_DNA"/>
</dbReference>
<dbReference type="EMBL" id="AE013599">
    <property type="protein sequence ID" value="AAO41389.1"/>
    <property type="molecule type" value="Genomic_DNA"/>
</dbReference>
<dbReference type="EMBL" id="AY051844">
    <property type="protein sequence ID" value="AAK93268.1"/>
    <property type="molecule type" value="mRNA"/>
</dbReference>
<dbReference type="EMBL" id="U38809">
    <property type="protein sequence ID" value="AAB08398.1"/>
    <property type="molecule type" value="mRNA"/>
</dbReference>
<dbReference type="PIR" id="S68452">
    <property type="entry name" value="S68452"/>
</dbReference>
<dbReference type="PIR" id="S69545">
    <property type="entry name" value="S69545"/>
</dbReference>
<dbReference type="RefSeq" id="NP_477127.1">
    <property type="nucleotide sequence ID" value="NM_057779.5"/>
</dbReference>
<dbReference type="RefSeq" id="NP_788362.1">
    <property type="nucleotide sequence ID" value="NM_176182.2"/>
</dbReference>
<dbReference type="SMR" id="Q24307"/>
<dbReference type="BioGRID" id="62475">
    <property type="interactions" value="181"/>
</dbReference>
<dbReference type="FunCoup" id="Q24307">
    <property type="interactions" value="2282"/>
</dbReference>
<dbReference type="IntAct" id="Q24307">
    <property type="interactions" value="16"/>
</dbReference>
<dbReference type="STRING" id="7227.FBpp0086431"/>
<dbReference type="MEROPS" id="I32.011"/>
<dbReference type="PaxDb" id="7227-FBpp0086432"/>
<dbReference type="DNASU" id="36748"/>
<dbReference type="EnsemblMetazoa" id="FBtr0087296">
    <property type="protein sequence ID" value="FBpp0086431"/>
    <property type="gene ID" value="FBgn0015247"/>
</dbReference>
<dbReference type="EnsemblMetazoa" id="FBtr0087297">
    <property type="protein sequence ID" value="FBpp0086432"/>
    <property type="gene ID" value="FBgn0015247"/>
</dbReference>
<dbReference type="GeneID" id="36748"/>
<dbReference type="KEGG" id="dme:Dmel_CG8293"/>
<dbReference type="UCSC" id="CG8293-RB">
    <property type="organism name" value="d. melanogaster"/>
</dbReference>
<dbReference type="AGR" id="FB:FBgn0015247"/>
<dbReference type="CTD" id="36748"/>
<dbReference type="FlyBase" id="FBgn0015247">
    <property type="gene designation" value="Diap2"/>
</dbReference>
<dbReference type="VEuPathDB" id="VectorBase:FBgn0015247"/>
<dbReference type="eggNOG" id="KOG1101">
    <property type="taxonomic scope" value="Eukaryota"/>
</dbReference>
<dbReference type="GeneTree" id="ENSGT00940000169803"/>
<dbReference type="HOGENOM" id="CLU_016347_1_1_1"/>
<dbReference type="InParanoid" id="Q24307"/>
<dbReference type="OMA" id="LRDCDPV"/>
<dbReference type="OrthoDB" id="774873at2759"/>
<dbReference type="PhylomeDB" id="Q24307"/>
<dbReference type="Reactome" id="R-DME-111459">
    <property type="pathway name" value="Activation of caspases through apoptosome-mediated cleavage"/>
</dbReference>
<dbReference type="Reactome" id="R-DME-111465">
    <property type="pathway name" value="Apoptotic cleavage of cellular proteins"/>
</dbReference>
<dbReference type="Reactome" id="R-DME-111469">
    <property type="pathway name" value="SMAC, XIAP-regulated apoptotic response"/>
</dbReference>
<dbReference type="Reactome" id="R-DME-209447">
    <property type="pathway name" value="Activation of the IkappaB kinase complex, KEY:IRD5 dimer:KEY"/>
</dbReference>
<dbReference type="Reactome" id="R-DME-3769402">
    <property type="pathway name" value="Deactivation of the beta-catenin transactivating complex"/>
</dbReference>
<dbReference type="Reactome" id="R-DME-5675482">
    <property type="pathway name" value="Regulation of necroptotic cell death"/>
</dbReference>
<dbReference type="Reactome" id="R-DME-8948747">
    <property type="pathway name" value="Regulation of PTEN localization"/>
</dbReference>
<dbReference type="Reactome" id="R-DME-8948751">
    <property type="pathway name" value="Regulation of PTEN stability and activity"/>
</dbReference>
<dbReference type="Reactome" id="R-DME-9627069">
    <property type="pathway name" value="Regulation of the apoptosome activity"/>
</dbReference>
<dbReference type="SignaLink" id="Q24307"/>
<dbReference type="BioGRID-ORCS" id="36748">
    <property type="hits" value="0 hits in 3 CRISPR screens"/>
</dbReference>
<dbReference type="GenomeRNAi" id="36748"/>
<dbReference type="PRO" id="PR:Q24307"/>
<dbReference type="Proteomes" id="UP000000803">
    <property type="component" value="Chromosome 2R"/>
</dbReference>
<dbReference type="Bgee" id="FBgn0015247">
    <property type="expression patterns" value="Expressed in second segment of antenna (Drosophila) and 198 other cell types or tissues"/>
</dbReference>
<dbReference type="GO" id="GO:0005737">
    <property type="term" value="C:cytoplasm"/>
    <property type="evidence" value="ECO:0000318"/>
    <property type="project" value="GO_Central"/>
</dbReference>
<dbReference type="GO" id="GO:0005829">
    <property type="term" value="C:cytosol"/>
    <property type="evidence" value="ECO:0000304"/>
    <property type="project" value="Reactome"/>
</dbReference>
<dbReference type="GO" id="GO:0005634">
    <property type="term" value="C:nucleus"/>
    <property type="evidence" value="ECO:0000318"/>
    <property type="project" value="GO_Central"/>
</dbReference>
<dbReference type="GO" id="GO:0048471">
    <property type="term" value="C:perinuclear region of cytoplasm"/>
    <property type="evidence" value="ECO:0000314"/>
    <property type="project" value="FlyBase"/>
</dbReference>
<dbReference type="GO" id="GO:0089720">
    <property type="term" value="F:caspase binding"/>
    <property type="evidence" value="ECO:0000353"/>
    <property type="project" value="FlyBase"/>
</dbReference>
<dbReference type="GO" id="GO:0004869">
    <property type="term" value="F:cysteine-type endopeptidase inhibitor activity"/>
    <property type="evidence" value="ECO:0000314"/>
    <property type="project" value="FlyBase"/>
</dbReference>
<dbReference type="GO" id="GO:0043027">
    <property type="term" value="F:cysteine-type endopeptidase inhibitor activity involved in apoptotic process"/>
    <property type="evidence" value="ECO:0000314"/>
    <property type="project" value="FlyBase"/>
</dbReference>
<dbReference type="GO" id="GO:0043028">
    <property type="term" value="F:cysteine-type endopeptidase regulator activity involved in apoptotic process"/>
    <property type="evidence" value="ECO:0000315"/>
    <property type="project" value="FlyBase"/>
</dbReference>
<dbReference type="GO" id="GO:0061630">
    <property type="term" value="F:ubiquitin protein ligase activity"/>
    <property type="evidence" value="ECO:0000314"/>
    <property type="project" value="FlyBase"/>
</dbReference>
<dbReference type="GO" id="GO:0031625">
    <property type="term" value="F:ubiquitin protein ligase binding"/>
    <property type="evidence" value="ECO:0000353"/>
    <property type="project" value="FlyBase"/>
</dbReference>
<dbReference type="GO" id="GO:0004842">
    <property type="term" value="F:ubiquitin-protein transferase activity"/>
    <property type="evidence" value="ECO:0000304"/>
    <property type="project" value="Reactome"/>
</dbReference>
<dbReference type="GO" id="GO:0008270">
    <property type="term" value="F:zinc ion binding"/>
    <property type="evidence" value="ECO:0000255"/>
    <property type="project" value="FlyBase"/>
</dbReference>
<dbReference type="GO" id="GO:0006915">
    <property type="term" value="P:apoptotic process"/>
    <property type="evidence" value="ECO:0007669"/>
    <property type="project" value="UniProtKB-KW"/>
</dbReference>
<dbReference type="GO" id="GO:0022416">
    <property type="term" value="P:chaeta development"/>
    <property type="evidence" value="ECO:0000315"/>
    <property type="project" value="FlyBase"/>
</dbReference>
<dbReference type="GO" id="GO:0050829">
    <property type="term" value="P:defense response to Gram-negative bacterium"/>
    <property type="evidence" value="ECO:0000315"/>
    <property type="project" value="FlyBase"/>
</dbReference>
<dbReference type="GO" id="GO:0045087">
    <property type="term" value="P:innate immune response"/>
    <property type="evidence" value="ECO:0007669"/>
    <property type="project" value="UniProtKB-KW"/>
</dbReference>
<dbReference type="GO" id="GO:0043066">
    <property type="term" value="P:negative regulation of apoptotic process"/>
    <property type="evidence" value="ECO:0000314"/>
    <property type="project" value="FlyBase"/>
</dbReference>
<dbReference type="GO" id="GO:0061057">
    <property type="term" value="P:peptidoglycan recognition protein signaling pathway"/>
    <property type="evidence" value="ECO:0000314"/>
    <property type="project" value="FlyBase"/>
</dbReference>
<dbReference type="GO" id="GO:0006964">
    <property type="term" value="P:positive regulation of biosynthetic process of antibacterial peptides active against Gram-negative bacteria"/>
    <property type="evidence" value="ECO:0000315"/>
    <property type="project" value="FlyBase"/>
</dbReference>
<dbReference type="GO" id="GO:0031398">
    <property type="term" value="P:positive regulation of protein ubiquitination"/>
    <property type="evidence" value="ECO:0000318"/>
    <property type="project" value="GO_Central"/>
</dbReference>
<dbReference type="GO" id="GO:0070936">
    <property type="term" value="P:protein K48-linked ubiquitination"/>
    <property type="evidence" value="ECO:0000314"/>
    <property type="project" value="FlyBase"/>
</dbReference>
<dbReference type="GO" id="GO:0070534">
    <property type="term" value="P:protein K63-linked ubiquitination"/>
    <property type="evidence" value="ECO:0000314"/>
    <property type="project" value="FlyBase"/>
</dbReference>
<dbReference type="GO" id="GO:0016567">
    <property type="term" value="P:protein ubiquitination"/>
    <property type="evidence" value="ECO:0000314"/>
    <property type="project" value="FlyBase"/>
</dbReference>
<dbReference type="GO" id="GO:0051726">
    <property type="term" value="P:regulation of cell cycle"/>
    <property type="evidence" value="ECO:0000318"/>
    <property type="project" value="GO_Central"/>
</dbReference>
<dbReference type="GO" id="GO:0006511">
    <property type="term" value="P:ubiquitin-dependent protein catabolic process"/>
    <property type="evidence" value="ECO:0000315"/>
    <property type="project" value="FlyBase"/>
</dbReference>
<dbReference type="CDD" id="cd00022">
    <property type="entry name" value="BIR"/>
    <property type="match status" value="3"/>
</dbReference>
<dbReference type="CDD" id="cd16713">
    <property type="entry name" value="RING-HC_BIRC2_3_7"/>
    <property type="match status" value="1"/>
</dbReference>
<dbReference type="CDD" id="cd14321">
    <property type="entry name" value="UBA_IAPs"/>
    <property type="match status" value="1"/>
</dbReference>
<dbReference type="FunFam" id="1.10.1170.10:FF:000031">
    <property type="entry name" value="Apoptosis 2 inhibitor-like Protein"/>
    <property type="match status" value="1"/>
</dbReference>
<dbReference type="FunFam" id="3.30.40.10:FF:000184">
    <property type="entry name" value="Baculoviral IAP repeat containing 2"/>
    <property type="match status" value="1"/>
</dbReference>
<dbReference type="FunFam" id="1.10.1170.10:FF:000002">
    <property type="entry name" value="Baculoviral IAP repeat containing 7"/>
    <property type="match status" value="1"/>
</dbReference>
<dbReference type="FunFam" id="1.10.1170.10:FF:000029">
    <property type="entry name" value="Death-associated inhibitor of apoptosis 2"/>
    <property type="match status" value="1"/>
</dbReference>
<dbReference type="FunFam" id="1.10.1170.10:FF:000035">
    <property type="entry name" value="Death-associated inhibitor of apoptosis 2"/>
    <property type="match status" value="1"/>
</dbReference>
<dbReference type="Gene3D" id="1.10.8.10">
    <property type="entry name" value="DNA helicase RuvA subunit, C-terminal domain"/>
    <property type="match status" value="1"/>
</dbReference>
<dbReference type="Gene3D" id="1.10.1170.10">
    <property type="entry name" value="Inhibitor Of Apoptosis Protein (2mihbC-IAP-1), Chain A"/>
    <property type="match status" value="3"/>
</dbReference>
<dbReference type="Gene3D" id="3.30.40.10">
    <property type="entry name" value="Zinc/RING finger domain, C3HC4 (zinc finger)"/>
    <property type="match status" value="1"/>
</dbReference>
<dbReference type="InterPro" id="IPR001370">
    <property type="entry name" value="BIR_rpt"/>
</dbReference>
<dbReference type="InterPro" id="IPR050784">
    <property type="entry name" value="IAP"/>
</dbReference>
<dbReference type="InterPro" id="IPR001841">
    <property type="entry name" value="Znf_RING"/>
</dbReference>
<dbReference type="InterPro" id="IPR013083">
    <property type="entry name" value="Znf_RING/FYVE/PHD"/>
</dbReference>
<dbReference type="PANTHER" id="PTHR10044:SF139">
    <property type="entry name" value="DEATH-ASSOCIATED INHIBITOR OF APOPTOSIS 2"/>
    <property type="match status" value="1"/>
</dbReference>
<dbReference type="PANTHER" id="PTHR10044">
    <property type="entry name" value="INHIBITOR OF APOPTOSIS"/>
    <property type="match status" value="1"/>
</dbReference>
<dbReference type="Pfam" id="PF00653">
    <property type="entry name" value="BIR"/>
    <property type="match status" value="3"/>
</dbReference>
<dbReference type="Pfam" id="PF13920">
    <property type="entry name" value="zf-C3HC4_3"/>
    <property type="match status" value="1"/>
</dbReference>
<dbReference type="SMART" id="SM00238">
    <property type="entry name" value="BIR"/>
    <property type="match status" value="3"/>
</dbReference>
<dbReference type="SMART" id="SM00184">
    <property type="entry name" value="RING"/>
    <property type="match status" value="1"/>
</dbReference>
<dbReference type="SUPFAM" id="SSF57924">
    <property type="entry name" value="Inhibitor of apoptosis (IAP) repeat"/>
    <property type="match status" value="3"/>
</dbReference>
<dbReference type="PROSITE" id="PS01282">
    <property type="entry name" value="BIR_REPEAT_1"/>
    <property type="match status" value="3"/>
</dbReference>
<dbReference type="PROSITE" id="PS50143">
    <property type="entry name" value="BIR_REPEAT_2"/>
    <property type="match status" value="3"/>
</dbReference>
<dbReference type="PROSITE" id="PS50089">
    <property type="entry name" value="ZF_RING_2"/>
    <property type="match status" value="1"/>
</dbReference>
<keyword id="KW-0053">Apoptosis</keyword>
<keyword id="KW-0963">Cytoplasm</keyword>
<keyword id="KW-0391">Immunity</keyword>
<keyword id="KW-0399">Innate immunity</keyword>
<keyword id="KW-0479">Metal-binding</keyword>
<keyword id="KW-0539">Nucleus</keyword>
<keyword id="KW-1185">Reference proteome</keyword>
<keyword id="KW-0677">Repeat</keyword>
<keyword id="KW-0862">Zinc</keyword>
<keyword id="KW-0863">Zinc-finger</keyword>
<feature type="chain" id="PRO_0000122368" description="Death-associated inhibitor of apoptosis 2">
    <location>
        <begin position="1"/>
        <end position="498"/>
    </location>
</feature>
<feature type="repeat" description="BIR 1" evidence="1">
    <location>
        <begin position="12"/>
        <end position="77"/>
    </location>
</feature>
<feature type="repeat" description="BIR 2" evidence="1">
    <location>
        <begin position="116"/>
        <end position="180"/>
    </location>
</feature>
<feature type="repeat" description="BIR 3" evidence="1">
    <location>
        <begin position="215"/>
        <end position="280"/>
    </location>
</feature>
<feature type="zinc finger region" description="RING-type" evidence="2">
    <location>
        <begin position="451"/>
        <end position="486"/>
    </location>
</feature>
<feature type="binding site" evidence="1">
    <location>
        <position position="249"/>
    </location>
    <ligand>
        <name>Zn(2+)</name>
        <dbReference type="ChEBI" id="CHEBI:29105"/>
    </ligand>
</feature>
<feature type="binding site" evidence="1">
    <location>
        <position position="252"/>
    </location>
    <ligand>
        <name>Zn(2+)</name>
        <dbReference type="ChEBI" id="CHEBI:29105"/>
    </ligand>
</feature>
<feature type="binding site" evidence="1">
    <location>
        <position position="269"/>
    </location>
    <ligand>
        <name>Zn(2+)</name>
        <dbReference type="ChEBI" id="CHEBI:29105"/>
    </ligand>
</feature>
<feature type="binding site" evidence="1">
    <location>
        <position position="276"/>
    </location>
    <ligand>
        <name>Zn(2+)</name>
        <dbReference type="ChEBI" id="CHEBI:29105"/>
    </ligand>
</feature>
<feature type="site" description="Cleavage; by caspases" evidence="6">
    <location>
        <begin position="100"/>
        <end position="101"/>
    </location>
</feature>
<feature type="mutagenesis site" description="No effect on caspase-mediated cleavage." evidence="6">
    <original>D</original>
    <variation>E</variation>
    <location>
        <position position="92"/>
    </location>
</feature>
<feature type="mutagenesis site" description="Loss of caspase-mediated cleavage, failure to protect against Drice-mediated cell death and loss of binding to Drice." evidence="6">
    <original>D</original>
    <variation>E</variation>
    <location>
        <position position="100"/>
    </location>
</feature>
<feature type="mutagenesis site" description="No effect on binding to Drice or Dredd." evidence="6 7">
    <original>C</original>
    <variation>G</variation>
    <location>
        <position position="149"/>
    </location>
</feature>
<feature type="mutagenesis site" description="No effect on binding to Drice. Loss of immunity to Gram-negative bacteria; when associated with A-263." evidence="6 7">
    <original>D</original>
    <variation>A</variation>
    <location>
        <position position="163"/>
    </location>
</feature>
<feature type="mutagenesis site" description="Abolishes binding to Drice and fails to inhibit cell death. No effect on binding to Dredd." evidence="6 7">
    <original>C</original>
    <variation>G</variation>
    <location>
        <position position="249"/>
    </location>
</feature>
<feature type="mutagenesis site" description="Abolishes binding to Drice. Loss of immunity to Gram-negative bacteria; when associated with A-163." evidence="6 7">
    <original>D</original>
    <variation>A</variation>
    <location>
        <position position="263"/>
    </location>
</feature>
<feature type="mutagenesis site" description="Fails to bind to Dredd and promote its polyubiquitylation." evidence="7">
    <original>C</original>
    <variation>Y</variation>
    <location>
        <position position="466"/>
    </location>
</feature>
<feature type="sequence conflict" description="In Ref. 2; AAC46988." evidence="10" ref="2">
    <original>G</original>
    <variation>V</variation>
    <location>
        <position position="5"/>
    </location>
</feature>
<feature type="sequence conflict" description="In Ref. 2; AAC46988." evidence="10" ref="2">
    <original>N</original>
    <variation>K</variation>
    <location>
        <position position="40"/>
    </location>
</feature>
<feature type="sequence conflict" description="In Ref. 3; AAC47155." evidence="10" ref="3">
    <original>ER</original>
    <variation>AG</variation>
    <location>
        <begin position="64"/>
        <end position="65"/>
    </location>
</feature>
<feature type="sequence conflict" description="In Ref. 1; AAC41610." evidence="10" ref="1">
    <original>E</original>
    <variation>K</variation>
    <location>
        <position position="94"/>
    </location>
</feature>
<feature type="sequence conflict" description="In Ref. 8; AAB08398." evidence="10" ref="8">
    <original>A</original>
    <variation>D</variation>
    <location>
        <position position="282"/>
    </location>
</feature>
<feature type="sequence conflict" description="In Ref. 3; AAC47155." evidence="10" ref="3">
    <original>A</original>
    <variation>S</variation>
    <location>
        <position position="286"/>
    </location>
</feature>
<feature type="sequence conflict" description="In Ref. 1; AAC41610, 3; AAC47155 and 8; AAB08398." evidence="10" ref="1 3 8">
    <original>Q</original>
    <variation>P</variation>
    <location>
        <position position="302"/>
    </location>
</feature>
<feature type="sequence conflict" description="In Ref. 8; AAB08398." evidence="10" ref="8">
    <original>P</original>
    <variation>T</variation>
    <location>
        <position position="303"/>
    </location>
</feature>
<feature type="sequence conflict" description="In Ref. 2; AAC46988." evidence="10" ref="2">
    <original>A</original>
    <variation>T</variation>
    <location>
        <position position="327"/>
    </location>
</feature>
<feature type="sequence conflict" description="In Ref. 3; AAC47155." evidence="10" ref="3">
    <original>ALEVREPP</original>
    <variation>DWRCASR</variation>
    <location>
        <begin position="369"/>
        <end position="376"/>
    </location>
</feature>